<name>FOS1_ORYSJ</name>
<evidence type="ECO:0000256" key="1">
    <source>
        <dbReference type="SAM" id="MobiDB-lite"/>
    </source>
</evidence>
<evidence type="ECO:0000269" key="2">
    <source>
    </source>
</evidence>
<evidence type="ECO:0000305" key="3"/>
<gene>
    <name type="primary">FOS1</name>
    <name type="synonym">CLE202</name>
    <name type="ordered locus">Os02g0324400</name>
    <name type="ordered locus">LOC_Os02g21890</name>
    <name type="ORF">OsJ_06495</name>
    <name type="ORF">P0688H12.37</name>
</gene>
<protein>
    <recommendedName>
        <fullName>Inactive protein FON2 SPARE1</fullName>
    </recommendedName>
    <alternativeName>
        <fullName>CLAVATA3/ESR (CLE)-related protein 202</fullName>
        <shortName>OsCLE202</shortName>
    </alternativeName>
</protein>
<accession>Q6Z6T2</accession>
<accession>A0A0P0VIA7</accession>
<reference key="1">
    <citation type="journal article" date="2007" name="Plant Cell Physiol.">
        <title>Gain-of-Function Phenotypes of Chemically Synthetic CLAVATA3/ESR-Related (CLE) Peptides in Arabidopsis thaliana and Oryza sativa.</title>
        <authorList>
            <person name="Kinoshita A."/>
            <person name="Nakamura Y."/>
            <person name="Sasaki E."/>
            <person name="Kyozuka J."/>
            <person name="Fukuda H."/>
            <person name="Sawa S."/>
        </authorList>
    </citation>
    <scope>NUCLEOTIDE SEQUENCE [MRNA]</scope>
</reference>
<reference key="2">
    <citation type="journal article" date="2009" name="PLoS Genet.">
        <title>FON2 SPARE1 redundantly regulates floral meristem maintenance with FLORAL ORGAN NUMBER2 in rice.</title>
        <authorList>
            <person name="Suzaki T."/>
            <person name="Ohneda M."/>
            <person name="Toriba T."/>
            <person name="Yoshida A."/>
            <person name="Hirano H.Y."/>
        </authorList>
    </citation>
    <scope>NUCLEOTIDE SEQUENCE [MRNA]</scope>
    <scope>FUNCTION</scope>
    <scope>TISSUE SPECIFICITY</scope>
    <source>
        <strain>cv. Nipponbare</strain>
    </source>
</reference>
<reference key="3">
    <citation type="journal article" date="2005" name="Nature">
        <title>The map-based sequence of the rice genome.</title>
        <authorList>
            <consortium name="International rice genome sequencing project (IRGSP)"/>
        </authorList>
    </citation>
    <scope>NUCLEOTIDE SEQUENCE [LARGE SCALE GENOMIC DNA]</scope>
    <source>
        <strain>cv. Nipponbare</strain>
    </source>
</reference>
<reference key="4">
    <citation type="journal article" date="2008" name="Nucleic Acids Res.">
        <title>The rice annotation project database (RAP-DB): 2008 update.</title>
        <authorList>
            <consortium name="The rice annotation project (RAP)"/>
        </authorList>
    </citation>
    <scope>GENOME REANNOTATION</scope>
    <source>
        <strain>cv. Nipponbare</strain>
    </source>
</reference>
<reference key="5">
    <citation type="journal article" date="2013" name="Rice">
        <title>Improvement of the Oryza sativa Nipponbare reference genome using next generation sequence and optical map data.</title>
        <authorList>
            <person name="Kawahara Y."/>
            <person name="de la Bastide M."/>
            <person name="Hamilton J.P."/>
            <person name="Kanamori H."/>
            <person name="McCombie W.R."/>
            <person name="Ouyang S."/>
            <person name="Schwartz D.C."/>
            <person name="Tanaka T."/>
            <person name="Wu J."/>
            <person name="Zhou S."/>
            <person name="Childs K.L."/>
            <person name="Davidson R.M."/>
            <person name="Lin H."/>
            <person name="Quesada-Ocampo L."/>
            <person name="Vaillancourt B."/>
            <person name="Sakai H."/>
            <person name="Lee S.S."/>
            <person name="Kim J."/>
            <person name="Numa H."/>
            <person name="Itoh T."/>
            <person name="Buell C.R."/>
            <person name="Matsumoto T."/>
        </authorList>
    </citation>
    <scope>GENOME REANNOTATION</scope>
    <source>
        <strain>cv. Nipponbare</strain>
    </source>
</reference>
<reference key="6">
    <citation type="journal article" date="2005" name="PLoS Biol.">
        <title>The genomes of Oryza sativa: a history of duplications.</title>
        <authorList>
            <person name="Yu J."/>
            <person name="Wang J."/>
            <person name="Lin W."/>
            <person name="Li S."/>
            <person name="Li H."/>
            <person name="Zhou J."/>
            <person name="Ni P."/>
            <person name="Dong W."/>
            <person name="Hu S."/>
            <person name="Zeng C."/>
            <person name="Zhang J."/>
            <person name="Zhang Y."/>
            <person name="Li R."/>
            <person name="Xu Z."/>
            <person name="Li S."/>
            <person name="Li X."/>
            <person name="Zheng H."/>
            <person name="Cong L."/>
            <person name="Lin L."/>
            <person name="Yin J."/>
            <person name="Geng J."/>
            <person name="Li G."/>
            <person name="Shi J."/>
            <person name="Liu J."/>
            <person name="Lv H."/>
            <person name="Li J."/>
            <person name="Wang J."/>
            <person name="Deng Y."/>
            <person name="Ran L."/>
            <person name="Shi X."/>
            <person name="Wang X."/>
            <person name="Wu Q."/>
            <person name="Li C."/>
            <person name="Ren X."/>
            <person name="Wang J."/>
            <person name="Wang X."/>
            <person name="Li D."/>
            <person name="Liu D."/>
            <person name="Zhang X."/>
            <person name="Ji Z."/>
            <person name="Zhao W."/>
            <person name="Sun Y."/>
            <person name="Zhang Z."/>
            <person name="Bao J."/>
            <person name="Han Y."/>
            <person name="Dong L."/>
            <person name="Ji J."/>
            <person name="Chen P."/>
            <person name="Wu S."/>
            <person name="Liu J."/>
            <person name="Xiao Y."/>
            <person name="Bu D."/>
            <person name="Tan J."/>
            <person name="Yang L."/>
            <person name="Ye C."/>
            <person name="Zhang J."/>
            <person name="Xu J."/>
            <person name="Zhou Y."/>
            <person name="Yu Y."/>
            <person name="Zhang B."/>
            <person name="Zhuang S."/>
            <person name="Wei H."/>
            <person name="Liu B."/>
            <person name="Lei M."/>
            <person name="Yu H."/>
            <person name="Li Y."/>
            <person name="Xu H."/>
            <person name="Wei S."/>
            <person name="He X."/>
            <person name="Fang L."/>
            <person name="Zhang Z."/>
            <person name="Zhang Y."/>
            <person name="Huang X."/>
            <person name="Su Z."/>
            <person name="Tong W."/>
            <person name="Li J."/>
            <person name="Tong Z."/>
            <person name="Li S."/>
            <person name="Ye J."/>
            <person name="Wang L."/>
            <person name="Fang L."/>
            <person name="Lei T."/>
            <person name="Chen C.-S."/>
            <person name="Chen H.-C."/>
            <person name="Xu Z."/>
            <person name="Li H."/>
            <person name="Huang H."/>
            <person name="Zhang F."/>
            <person name="Xu H."/>
            <person name="Li N."/>
            <person name="Zhao C."/>
            <person name="Li S."/>
            <person name="Dong L."/>
            <person name="Huang Y."/>
            <person name="Li L."/>
            <person name="Xi Y."/>
            <person name="Qi Q."/>
            <person name="Li W."/>
            <person name="Zhang B."/>
            <person name="Hu W."/>
            <person name="Zhang Y."/>
            <person name="Tian X."/>
            <person name="Jiao Y."/>
            <person name="Liang X."/>
            <person name="Jin J."/>
            <person name="Gao L."/>
            <person name="Zheng W."/>
            <person name="Hao B."/>
            <person name="Liu S.-M."/>
            <person name="Wang W."/>
            <person name="Yuan L."/>
            <person name="Cao M."/>
            <person name="McDermott J."/>
            <person name="Samudrala R."/>
            <person name="Wang J."/>
            <person name="Wong G.K.-S."/>
            <person name="Yang H."/>
        </authorList>
    </citation>
    <scope>NUCLEOTIDE SEQUENCE [LARGE SCALE GENOMIC DNA]</scope>
    <source>
        <strain>cv. Nipponbare</strain>
    </source>
</reference>
<reference key="7">
    <citation type="journal article" date="2003" name="Science">
        <title>Collection, mapping, and annotation of over 28,000 cDNA clones from japonica rice.</title>
        <authorList>
            <consortium name="The rice full-length cDNA consortium"/>
        </authorList>
    </citation>
    <scope>NUCLEOTIDE SEQUENCE [LARGE SCALE MRNA]</scope>
    <source>
        <strain>cv. Nipponbare</strain>
    </source>
</reference>
<feature type="chain" id="PRO_0000422038" description="Inactive protein FON2 SPARE1">
    <location>
        <begin position="1"/>
        <end position="131"/>
    </location>
</feature>
<feature type="region of interest" description="Disordered" evidence="1">
    <location>
        <begin position="67"/>
        <end position="131"/>
    </location>
</feature>
<feature type="compositionally biased region" description="Basic residues" evidence="1">
    <location>
        <begin position="76"/>
        <end position="97"/>
    </location>
</feature>
<proteinExistence type="evidence at transcript level"/>
<comment type="function">
    <text evidence="2">Non functional suppressor of the fon2 mutation. In Oryza sativa subsp. japonica, the protein has a single amino acid substitution at the putative processing site of the signal peptide while in all the other varieties/species of domesticated and wild rice tested the protein is functional.</text>
</comment>
<comment type="tissue specificity">
    <text evidence="2">Expressed in all aerial apical meristems, including the floral and inflorescence meristems in the reproductive phase and the shoot apical meristem in the vegetative phase. Also detected in the primordia of lateral organs such as the leaf and the floral organs.</text>
</comment>
<comment type="similarity">
    <text evidence="3">Belongs to the CLV3/ESR signal peptide family.</text>
</comment>
<comment type="caution">
    <text evidence="3">Due to an amino acid substitution at the processing site, the putative signal sequence is probably not cleaved and the protein is inactive.</text>
</comment>
<organism>
    <name type="scientific">Oryza sativa subsp. japonica</name>
    <name type="common">Rice</name>
    <dbReference type="NCBI Taxonomy" id="39947"/>
    <lineage>
        <taxon>Eukaryota</taxon>
        <taxon>Viridiplantae</taxon>
        <taxon>Streptophyta</taxon>
        <taxon>Embryophyta</taxon>
        <taxon>Tracheophyta</taxon>
        <taxon>Spermatophyta</taxon>
        <taxon>Magnoliopsida</taxon>
        <taxon>Liliopsida</taxon>
        <taxon>Poales</taxon>
        <taxon>Poaceae</taxon>
        <taxon>BOP clade</taxon>
        <taxon>Oryzoideae</taxon>
        <taxon>Oryzeae</taxon>
        <taxon>Oryzinae</taxon>
        <taxon>Oryza</taxon>
        <taxon>Oryza sativa</taxon>
    </lineage>
</organism>
<dbReference type="EMBL" id="AB332053">
    <property type="protein sequence ID" value="BAF91608.1"/>
    <property type="molecule type" value="mRNA"/>
</dbReference>
<dbReference type="EMBL" id="AB455109">
    <property type="protein sequence ID" value="BAI45201.1"/>
    <property type="molecule type" value="mRNA"/>
</dbReference>
<dbReference type="EMBL" id="AB455111">
    <property type="protein sequence ID" value="BAI45203.1"/>
    <property type="molecule type" value="mRNA"/>
</dbReference>
<dbReference type="EMBL" id="AP004890">
    <property type="protein sequence ID" value="BAD15963.1"/>
    <property type="molecule type" value="Genomic_DNA"/>
</dbReference>
<dbReference type="EMBL" id="AP008208">
    <property type="protein sequence ID" value="BAF08611.1"/>
    <property type="molecule type" value="Genomic_DNA"/>
</dbReference>
<dbReference type="EMBL" id="AP014958">
    <property type="protein sequence ID" value="BAS78399.1"/>
    <property type="molecule type" value="Genomic_DNA"/>
</dbReference>
<dbReference type="EMBL" id="CM000139">
    <property type="protein sequence ID" value="EAZ22818.1"/>
    <property type="molecule type" value="Genomic_DNA"/>
</dbReference>
<dbReference type="EMBL" id="AK061156">
    <property type="protein sequence ID" value="BAG87763.1"/>
    <property type="molecule type" value="mRNA"/>
</dbReference>
<dbReference type="RefSeq" id="XP_015624031.1">
    <property type="nucleotide sequence ID" value="XM_015768545.1"/>
</dbReference>
<dbReference type="STRING" id="39947.Q6Z6T2"/>
<dbReference type="PaxDb" id="39947-Q6Z6T2"/>
<dbReference type="EnsemblPlants" id="Os02t0324400-01">
    <property type="protein sequence ID" value="Os02t0324400-01"/>
    <property type="gene ID" value="Os02g0324400"/>
</dbReference>
<dbReference type="Gramene" id="Os02t0324400-01">
    <property type="protein sequence ID" value="Os02t0324400-01"/>
    <property type="gene ID" value="Os02g0324400"/>
</dbReference>
<dbReference type="KEGG" id="dosa:Os02g0324400"/>
<dbReference type="eggNOG" id="ENOG502S8TY">
    <property type="taxonomic scope" value="Eukaryota"/>
</dbReference>
<dbReference type="HOGENOM" id="CLU_145048_1_0_1"/>
<dbReference type="InParanoid" id="Q6Z6T2"/>
<dbReference type="OMA" id="AMIDPRY"/>
<dbReference type="OrthoDB" id="753861at2759"/>
<dbReference type="Proteomes" id="UP000000763">
    <property type="component" value="Chromosome 2"/>
</dbReference>
<dbReference type="Proteomes" id="UP000007752">
    <property type="component" value="Chromosome 2"/>
</dbReference>
<dbReference type="Proteomes" id="UP000059680">
    <property type="component" value="Chromosome 2"/>
</dbReference>
<dbReference type="GO" id="GO:0030154">
    <property type="term" value="P:cell differentiation"/>
    <property type="evidence" value="ECO:0007669"/>
    <property type="project" value="UniProtKB-KW"/>
</dbReference>
<dbReference type="InterPro" id="IPR039618">
    <property type="entry name" value="CLE9-13"/>
</dbReference>
<dbReference type="PANTHER" id="PTHR34359">
    <property type="entry name" value="CLAVATA3/ESR (CLE)-RELATED PROTEIN 10"/>
    <property type="match status" value="1"/>
</dbReference>
<dbReference type="PANTHER" id="PTHR34359:SF24">
    <property type="entry name" value="INACTIVE PROTEIN FON2 SPARE1"/>
    <property type="match status" value="1"/>
</dbReference>
<sequence length="131" mass="14568">MSRRLGAAAAVLLLWLAVLTFALHGYYGGRLGSARRRNILLQHPALALHLPTRKMLLAVASFDDASSPSSLTTTDRHHHHHRHHGHHHHRGHDRWNRKGVPPTAAGPGEEVDPRFGVQKRLVPTGPNPLHH</sequence>
<keyword id="KW-0217">Developmental protein</keyword>
<keyword id="KW-0221">Differentiation</keyword>
<keyword id="KW-1185">Reference proteome</keyword>